<gene>
    <name type="primary">tef102</name>
    <name type="synonym">ef1a-b</name>
    <name type="synonym">tef1b</name>
    <name type="ORF">SPAC23A1.10</name>
</gene>
<sequence length="460" mass="49675">MGKEKGHINVVVIGHVDSGKSTTTGHLIYKCGGIDKRTIEKFEKEATELGKGSFKYAWVLDKLKAERERGITIDIALWKFETPKYNVTVIDAPGHRDFIKNMITGTSQADCAILIIGGGTGEFEAGISKDGQTREHALLAYTLGVKQLIVAVNKMDTTGWSQARFEEIVKETSNFIKKVGFNPKTVPFVPVSGFQGDNMIEPTTNMPWYQGWQKETKAGVVKGKTLLEAIDSIEPPARPTDKPLRLPLQDVYKIGGIGTVPVGRVETGVIKPGMIVTFAPAGVTTEVKSVEMHHESLDAGLPGDNVGFNVKNVSVKDIRRGNVCGDSKNDPPMGCASFTAQVIILNHPGQISAGYSPVLDCHTAHIACKFAELIEKIDRRSGKKIEESPKFVKSGDACIAKMVPSKPMCVEAFTDYAPLGRFAVRDMRQTVAVGVIKAVEKVAPGAAKVTKAAVKAGAKK</sequence>
<organism>
    <name type="scientific">Schizosaccharomyces pombe (strain 972 / ATCC 24843)</name>
    <name type="common">Fission yeast</name>
    <dbReference type="NCBI Taxonomy" id="284812"/>
    <lineage>
        <taxon>Eukaryota</taxon>
        <taxon>Fungi</taxon>
        <taxon>Dikarya</taxon>
        <taxon>Ascomycota</taxon>
        <taxon>Taphrinomycotina</taxon>
        <taxon>Schizosaccharomycetes</taxon>
        <taxon>Schizosaccharomycetales</taxon>
        <taxon>Schizosaccharomycetaceae</taxon>
        <taxon>Schizosaccharomyces</taxon>
    </lineage>
</organism>
<name>EF1A2_SCHPO</name>
<feature type="initiator methionine" description="Removed" evidence="2">
    <location>
        <position position="1"/>
    </location>
</feature>
<feature type="chain" id="PRO_0000090969" description="Elongation factor 1-alpha-B">
    <location>
        <begin position="2"/>
        <end position="460"/>
    </location>
</feature>
<feature type="domain" description="tr-type G">
    <location>
        <begin position="5"/>
        <end position="240"/>
    </location>
</feature>
<feature type="region of interest" description="G1" evidence="1">
    <location>
        <begin position="14"/>
        <end position="21"/>
    </location>
</feature>
<feature type="region of interest" description="G2" evidence="1">
    <location>
        <begin position="70"/>
        <end position="74"/>
    </location>
</feature>
<feature type="region of interest" description="G3" evidence="1">
    <location>
        <begin position="91"/>
        <end position="94"/>
    </location>
</feature>
<feature type="region of interest" description="G4" evidence="1">
    <location>
        <begin position="153"/>
        <end position="156"/>
    </location>
</feature>
<feature type="region of interest" description="G5" evidence="1">
    <location>
        <begin position="192"/>
        <end position="194"/>
    </location>
</feature>
<feature type="binding site" evidence="1">
    <location>
        <begin position="14"/>
        <end position="21"/>
    </location>
    <ligand>
        <name>GTP</name>
        <dbReference type="ChEBI" id="CHEBI:37565"/>
    </ligand>
</feature>
<feature type="binding site" evidence="1">
    <location>
        <begin position="91"/>
        <end position="95"/>
    </location>
    <ligand>
        <name>GTP</name>
        <dbReference type="ChEBI" id="CHEBI:37565"/>
    </ligand>
</feature>
<feature type="binding site" evidence="1">
    <location>
        <begin position="153"/>
        <end position="156"/>
    </location>
    <ligand>
        <name>GTP</name>
        <dbReference type="ChEBI" id="CHEBI:37565"/>
    </ligand>
</feature>
<feature type="modified residue" description="N,N,N-trimethylglycine" evidence="2">
    <location>
        <position position="2"/>
    </location>
</feature>
<feature type="modified residue" description="N6,N6-dimethyllysine; alternate" evidence="2">
    <location>
        <position position="3"/>
    </location>
</feature>
<feature type="modified residue" description="N6-methyllysine; alternate" evidence="2">
    <location>
        <position position="3"/>
    </location>
</feature>
<feature type="modified residue" description="N6-methyllysine" evidence="2">
    <location>
        <position position="30"/>
    </location>
</feature>
<feature type="modified residue" description="N6,N6,N6-trimethyllysine" evidence="2">
    <location>
        <position position="79"/>
    </location>
</feature>
<feature type="modified residue" description="N6,N6-dimethyllysine; alternate" evidence="2">
    <location>
        <position position="316"/>
    </location>
</feature>
<feature type="modified residue" description="N6-methyllysine; alternate" evidence="2">
    <location>
        <position position="316"/>
    </location>
</feature>
<feature type="modified residue" description="N6-methyllysine" evidence="2">
    <location>
        <position position="390"/>
    </location>
</feature>
<feature type="sequence conflict" description="In Ref. 1; BAA11571." evidence="1" ref="1">
    <original>S</original>
    <variation>F</variation>
    <location>
        <position position="21"/>
    </location>
</feature>
<feature type="sequence conflict" description="In Ref. 1; BAA11571." evidence="1" ref="1">
    <original>L</original>
    <variation>R</variation>
    <location>
        <position position="139"/>
    </location>
</feature>
<feature type="sequence conflict" description="In Ref. 3; AAP86554." evidence="1" ref="3">
    <original>S</original>
    <variation>A</variation>
    <location>
        <position position="388"/>
    </location>
</feature>
<keyword id="KW-0963">Cytoplasm</keyword>
<keyword id="KW-0903">Direct protein sequencing</keyword>
<keyword id="KW-0251">Elongation factor</keyword>
<keyword id="KW-0342">GTP-binding</keyword>
<keyword id="KW-0488">Methylation</keyword>
<keyword id="KW-0547">Nucleotide-binding</keyword>
<keyword id="KW-0648">Protein biosynthesis</keyword>
<keyword id="KW-1185">Reference proteome</keyword>
<comment type="function">
    <text>This protein promotes the GTP-dependent binding of aminoacyl-tRNA to the A-site of ribosomes during protein biosynthesis.</text>
</comment>
<comment type="subcellular location">
    <subcellularLocation>
        <location>Cytoplasm</location>
    </subcellularLocation>
</comment>
<comment type="similarity">
    <text evidence="3">Belongs to the TRAFAC class translation factor GTPase superfamily. Classic translation factor GTPase family. EF-Tu/EF-1A subfamily.</text>
</comment>
<accession>P0CT54</accession>
<accession>P78764</accession>
<accession>Q10119</accession>
<accession>Q10158</accession>
<accession>Q7M4U9</accession>
<accession>Q7Z8V5</accession>
<proteinExistence type="evidence at protein level"/>
<protein>
    <recommendedName>
        <fullName>Elongation factor 1-alpha-B</fullName>
        <shortName>EF-1-alpha-B</shortName>
    </recommendedName>
</protein>
<evidence type="ECO:0000250" key="1"/>
<evidence type="ECO:0000250" key="2">
    <source>
        <dbReference type="UniProtKB" id="P02994"/>
    </source>
</evidence>
<evidence type="ECO:0000305" key="3"/>
<reference key="1">
    <citation type="journal article" date="1997" name="Gene">
        <title>Comprehensive cloning of Schizosaccharomyces pombe genes encoding translation elongation factors.</title>
        <authorList>
            <person name="Mita K."/>
            <person name="Morimyo M."/>
            <person name="Ito K."/>
            <person name="Sugaya K."/>
            <person name="Ebihara K."/>
            <person name="Hongo E."/>
            <person name="Higashi T."/>
            <person name="Hirayama Y."/>
            <person name="Nakamura Y."/>
        </authorList>
    </citation>
    <scope>NUCLEOTIDE SEQUENCE [MRNA]</scope>
    <source>
        <strain>972 / ATCC 24843</strain>
    </source>
</reference>
<reference key="2">
    <citation type="journal article" date="2002" name="Nature">
        <title>The genome sequence of Schizosaccharomyces pombe.</title>
        <authorList>
            <person name="Wood V."/>
            <person name="Gwilliam R."/>
            <person name="Rajandream M.A."/>
            <person name="Lyne M.H."/>
            <person name="Lyne R."/>
            <person name="Stewart A."/>
            <person name="Sgouros J.G."/>
            <person name="Peat N."/>
            <person name="Hayles J."/>
            <person name="Baker S.G."/>
            <person name="Basham D."/>
            <person name="Bowman S."/>
            <person name="Brooks K."/>
            <person name="Brown D."/>
            <person name="Brown S."/>
            <person name="Chillingworth T."/>
            <person name="Churcher C.M."/>
            <person name="Collins M."/>
            <person name="Connor R."/>
            <person name="Cronin A."/>
            <person name="Davis P."/>
            <person name="Feltwell T."/>
            <person name="Fraser A."/>
            <person name="Gentles S."/>
            <person name="Goble A."/>
            <person name="Hamlin N."/>
            <person name="Harris D.E."/>
            <person name="Hidalgo J."/>
            <person name="Hodgson G."/>
            <person name="Holroyd S."/>
            <person name="Hornsby T."/>
            <person name="Howarth S."/>
            <person name="Huckle E.J."/>
            <person name="Hunt S."/>
            <person name="Jagels K."/>
            <person name="James K.D."/>
            <person name="Jones L."/>
            <person name="Jones M."/>
            <person name="Leather S."/>
            <person name="McDonald S."/>
            <person name="McLean J."/>
            <person name="Mooney P."/>
            <person name="Moule S."/>
            <person name="Mungall K.L."/>
            <person name="Murphy L.D."/>
            <person name="Niblett D."/>
            <person name="Odell C."/>
            <person name="Oliver K."/>
            <person name="O'Neil S."/>
            <person name="Pearson D."/>
            <person name="Quail M.A."/>
            <person name="Rabbinowitsch E."/>
            <person name="Rutherford K.M."/>
            <person name="Rutter S."/>
            <person name="Saunders D."/>
            <person name="Seeger K."/>
            <person name="Sharp S."/>
            <person name="Skelton J."/>
            <person name="Simmonds M.N."/>
            <person name="Squares R."/>
            <person name="Squares S."/>
            <person name="Stevens K."/>
            <person name="Taylor K."/>
            <person name="Taylor R.G."/>
            <person name="Tivey A."/>
            <person name="Walsh S.V."/>
            <person name="Warren T."/>
            <person name="Whitehead S."/>
            <person name="Woodward J.R."/>
            <person name="Volckaert G."/>
            <person name="Aert R."/>
            <person name="Robben J."/>
            <person name="Grymonprez B."/>
            <person name="Weltjens I."/>
            <person name="Vanstreels E."/>
            <person name="Rieger M."/>
            <person name="Schaefer M."/>
            <person name="Mueller-Auer S."/>
            <person name="Gabel C."/>
            <person name="Fuchs M."/>
            <person name="Duesterhoeft A."/>
            <person name="Fritzc C."/>
            <person name="Holzer E."/>
            <person name="Moestl D."/>
            <person name="Hilbert H."/>
            <person name="Borzym K."/>
            <person name="Langer I."/>
            <person name="Beck A."/>
            <person name="Lehrach H."/>
            <person name="Reinhardt R."/>
            <person name="Pohl T.M."/>
            <person name="Eger P."/>
            <person name="Zimmermann W."/>
            <person name="Wedler H."/>
            <person name="Wambutt R."/>
            <person name="Purnelle B."/>
            <person name="Goffeau A."/>
            <person name="Cadieu E."/>
            <person name="Dreano S."/>
            <person name="Gloux S."/>
            <person name="Lelaure V."/>
            <person name="Mottier S."/>
            <person name="Galibert F."/>
            <person name="Aves S.J."/>
            <person name="Xiang Z."/>
            <person name="Hunt C."/>
            <person name="Moore K."/>
            <person name="Hurst S.M."/>
            <person name="Lucas M."/>
            <person name="Rochet M."/>
            <person name="Gaillardin C."/>
            <person name="Tallada V.A."/>
            <person name="Garzon A."/>
            <person name="Thode G."/>
            <person name="Daga R.R."/>
            <person name="Cruzado L."/>
            <person name="Jimenez J."/>
            <person name="Sanchez M."/>
            <person name="del Rey F."/>
            <person name="Benito J."/>
            <person name="Dominguez A."/>
            <person name="Revuelta J.L."/>
            <person name="Moreno S."/>
            <person name="Armstrong J."/>
            <person name="Forsburg S.L."/>
            <person name="Cerutti L."/>
            <person name="Lowe T."/>
            <person name="McCombie W.R."/>
            <person name="Paulsen I."/>
            <person name="Potashkin J."/>
            <person name="Shpakovski G.V."/>
            <person name="Ussery D."/>
            <person name="Barrell B.G."/>
            <person name="Nurse P."/>
        </authorList>
    </citation>
    <scope>NUCLEOTIDE SEQUENCE [LARGE SCALE GENOMIC DNA]</scope>
    <source>
        <strain>972 / ATCC 24843</strain>
    </source>
</reference>
<reference key="3">
    <citation type="journal article" date="2003" name="FEMS Yeast Res.">
        <title>Phylogenetic relationships among yeasts of the 'Saccharomyces complex' determined from multigene sequence analyses.</title>
        <authorList>
            <person name="Kurtzman C.P."/>
            <person name="Robnett C.J."/>
        </authorList>
    </citation>
    <scope>NUCLEOTIDE SEQUENCE [GENOMIC DNA] OF 22-397</scope>
    <source>
        <strain>NRRL Y-12796</strain>
    </source>
</reference>
<reference key="4">
    <citation type="journal article" date="1988" name="J. Biochem.">
        <title>Peptide elongation factor 1 from yeasts: purification and biochemical characterization of peptide elongation factors 1alpha and 1beta(gamma) from Saccharomyces carlsbergensis and Schizosaccharomyces pombe.</title>
        <authorList>
            <person name="Miyazaki M."/>
            <person name="Uritani M."/>
            <person name="Fujimura K."/>
            <person name="Yamakatsu H."/>
            <person name="Kageyama T."/>
            <person name="Takahashi K."/>
        </authorList>
    </citation>
    <scope>PROTEIN SEQUENCE OF 64-94</scope>
</reference>
<dbReference type="EMBL" id="D82573">
    <property type="protein sequence ID" value="BAA11571.1"/>
    <property type="molecule type" value="mRNA"/>
</dbReference>
<dbReference type="EMBL" id="CU329670">
    <property type="protein sequence ID" value="CAA16984.1"/>
    <property type="molecule type" value="Genomic_DNA"/>
</dbReference>
<dbReference type="EMBL" id="AF402093">
    <property type="protein sequence ID" value="AAP86554.1"/>
    <property type="molecule type" value="Genomic_DNA"/>
</dbReference>
<dbReference type="PIR" id="B41453">
    <property type="entry name" value="B41453"/>
</dbReference>
<dbReference type="PIR" id="T38230">
    <property type="entry name" value="T38230"/>
</dbReference>
<dbReference type="RefSeq" id="NP_594440.1">
    <property type="nucleotide sequence ID" value="NM_001019869.2"/>
</dbReference>
<dbReference type="SMR" id="P0CT54"/>
<dbReference type="FunCoup" id="P0CT54">
    <property type="interactions" value="401"/>
</dbReference>
<dbReference type="STRING" id="284812.P0CT54"/>
<dbReference type="iPTMnet" id="P0CT54"/>
<dbReference type="PaxDb" id="4896-SPAC23A1.10.1"/>
<dbReference type="EnsemblFungi" id="SPAC23A1.10.1">
    <property type="protein sequence ID" value="SPAC23A1.10.1:pep"/>
    <property type="gene ID" value="SPAC23A1.10"/>
</dbReference>
<dbReference type="EnsemblFungi" id="SPBC839.15c.1">
    <property type="protein sequence ID" value="SPBC839.15c.1:pep"/>
    <property type="gene ID" value="SPBC839.15c"/>
</dbReference>
<dbReference type="GeneID" id="2541984"/>
<dbReference type="KEGG" id="spo:2539917"/>
<dbReference type="KEGG" id="spo:2541984"/>
<dbReference type="PomBase" id="SPAC23A1.10">
    <property type="gene designation" value="tef102"/>
</dbReference>
<dbReference type="VEuPathDB" id="FungiDB:SPAC23A1.10"/>
<dbReference type="VEuPathDB" id="FungiDB:SPBC839.15c"/>
<dbReference type="eggNOG" id="KOG0052">
    <property type="taxonomic scope" value="Eukaryota"/>
</dbReference>
<dbReference type="InParanoid" id="P0CT54"/>
<dbReference type="OMA" id="AIRDMGM"/>
<dbReference type="PhylomeDB" id="P0CT54"/>
<dbReference type="Reactome" id="R-SPO-156842">
    <property type="pathway name" value="Eukaryotic Translation Elongation"/>
</dbReference>
<dbReference type="Reactome" id="R-SPO-3371511">
    <property type="pathway name" value="HSF1 activation"/>
</dbReference>
<dbReference type="Reactome" id="R-SPO-6798695">
    <property type="pathway name" value="Neutrophil degranulation"/>
</dbReference>
<dbReference type="Reactome" id="R-SPO-8876725">
    <property type="pathway name" value="Protein methylation"/>
</dbReference>
<dbReference type="PRO" id="PR:P0CT54"/>
<dbReference type="Proteomes" id="UP000002485">
    <property type="component" value="Chromosome I"/>
</dbReference>
<dbReference type="GO" id="GO:0005737">
    <property type="term" value="C:cytoplasm"/>
    <property type="evidence" value="ECO:0000314"/>
    <property type="project" value="PomBase"/>
</dbReference>
<dbReference type="GO" id="GO:0005829">
    <property type="term" value="C:cytosol"/>
    <property type="evidence" value="ECO:0007005"/>
    <property type="project" value="PomBase"/>
</dbReference>
<dbReference type="GO" id="GO:0005853">
    <property type="term" value="C:eukaryotic translation elongation factor 1 complex"/>
    <property type="evidence" value="ECO:0000266"/>
    <property type="project" value="PomBase"/>
</dbReference>
<dbReference type="GO" id="GO:0005516">
    <property type="term" value="F:calmodulin binding"/>
    <property type="evidence" value="ECO:0000314"/>
    <property type="project" value="PomBase"/>
</dbReference>
<dbReference type="GO" id="GO:0005525">
    <property type="term" value="F:GTP binding"/>
    <property type="evidence" value="ECO:0007669"/>
    <property type="project" value="UniProtKB-KW"/>
</dbReference>
<dbReference type="GO" id="GO:0003924">
    <property type="term" value="F:GTPase activity"/>
    <property type="evidence" value="ECO:0000318"/>
    <property type="project" value="GO_Central"/>
</dbReference>
<dbReference type="GO" id="GO:0003746">
    <property type="term" value="F:translation elongation factor activity"/>
    <property type="evidence" value="ECO:0000318"/>
    <property type="project" value="GO_Central"/>
</dbReference>
<dbReference type="GO" id="GO:0002182">
    <property type="term" value="P:cytoplasmic translational elongation"/>
    <property type="evidence" value="ECO:0000314"/>
    <property type="project" value="PomBase"/>
</dbReference>
<dbReference type="GO" id="GO:0006412">
    <property type="term" value="P:translation"/>
    <property type="evidence" value="ECO:0000318"/>
    <property type="project" value="GO_Central"/>
</dbReference>
<dbReference type="GO" id="GO:0006414">
    <property type="term" value="P:translational elongation"/>
    <property type="evidence" value="ECO:0000318"/>
    <property type="project" value="GO_Central"/>
</dbReference>
<dbReference type="CDD" id="cd01883">
    <property type="entry name" value="EF1_alpha"/>
    <property type="match status" value="1"/>
</dbReference>
<dbReference type="CDD" id="cd03693">
    <property type="entry name" value="EF1_alpha_II"/>
    <property type="match status" value="1"/>
</dbReference>
<dbReference type="CDD" id="cd03705">
    <property type="entry name" value="EF1_alpha_III"/>
    <property type="match status" value="1"/>
</dbReference>
<dbReference type="FunFam" id="2.40.30.10:FF:000003">
    <property type="entry name" value="Elongation factor 1-alpha"/>
    <property type="match status" value="1"/>
</dbReference>
<dbReference type="FunFam" id="2.40.30.10:FF:000005">
    <property type="entry name" value="Elongation factor 1-alpha"/>
    <property type="match status" value="1"/>
</dbReference>
<dbReference type="FunFam" id="3.40.50.300:FF:000211">
    <property type="entry name" value="Elongation factor 1-alpha"/>
    <property type="match status" value="1"/>
</dbReference>
<dbReference type="Gene3D" id="3.40.50.300">
    <property type="entry name" value="P-loop containing nucleotide triphosphate hydrolases"/>
    <property type="match status" value="1"/>
</dbReference>
<dbReference type="Gene3D" id="2.40.30.10">
    <property type="entry name" value="Translation factors"/>
    <property type="match status" value="2"/>
</dbReference>
<dbReference type="HAMAP" id="MF_00118_A">
    <property type="entry name" value="EF_Tu_A"/>
    <property type="match status" value="1"/>
</dbReference>
<dbReference type="InterPro" id="IPR004161">
    <property type="entry name" value="EFTu-like_2"/>
</dbReference>
<dbReference type="InterPro" id="IPR031157">
    <property type="entry name" value="G_TR_CS"/>
</dbReference>
<dbReference type="InterPro" id="IPR054696">
    <property type="entry name" value="GTP-eEF1A_C"/>
</dbReference>
<dbReference type="InterPro" id="IPR027417">
    <property type="entry name" value="P-loop_NTPase"/>
</dbReference>
<dbReference type="InterPro" id="IPR000795">
    <property type="entry name" value="T_Tr_GTP-bd_dom"/>
</dbReference>
<dbReference type="InterPro" id="IPR050100">
    <property type="entry name" value="TRAFAC_GTPase_members"/>
</dbReference>
<dbReference type="InterPro" id="IPR009000">
    <property type="entry name" value="Transl_B-barrel_sf"/>
</dbReference>
<dbReference type="InterPro" id="IPR009001">
    <property type="entry name" value="Transl_elong_EF1A/Init_IF2_C"/>
</dbReference>
<dbReference type="InterPro" id="IPR004539">
    <property type="entry name" value="Transl_elong_EF1A_euk/arc"/>
</dbReference>
<dbReference type="NCBIfam" id="TIGR00483">
    <property type="entry name" value="EF-1_alpha"/>
    <property type="match status" value="1"/>
</dbReference>
<dbReference type="NCBIfam" id="NF008969">
    <property type="entry name" value="PRK12317.1"/>
    <property type="match status" value="1"/>
</dbReference>
<dbReference type="PANTHER" id="PTHR23115">
    <property type="entry name" value="TRANSLATION FACTOR"/>
    <property type="match status" value="1"/>
</dbReference>
<dbReference type="Pfam" id="PF22594">
    <property type="entry name" value="GTP-eEF1A_C"/>
    <property type="match status" value="1"/>
</dbReference>
<dbReference type="Pfam" id="PF00009">
    <property type="entry name" value="GTP_EFTU"/>
    <property type="match status" value="1"/>
</dbReference>
<dbReference type="Pfam" id="PF03144">
    <property type="entry name" value="GTP_EFTU_D2"/>
    <property type="match status" value="1"/>
</dbReference>
<dbReference type="PRINTS" id="PR00315">
    <property type="entry name" value="ELONGATNFCT"/>
</dbReference>
<dbReference type="SUPFAM" id="SSF50465">
    <property type="entry name" value="EF-Tu/eEF-1alpha/eIF2-gamma C-terminal domain"/>
    <property type="match status" value="1"/>
</dbReference>
<dbReference type="SUPFAM" id="SSF52540">
    <property type="entry name" value="P-loop containing nucleoside triphosphate hydrolases"/>
    <property type="match status" value="1"/>
</dbReference>
<dbReference type="SUPFAM" id="SSF50447">
    <property type="entry name" value="Translation proteins"/>
    <property type="match status" value="1"/>
</dbReference>
<dbReference type="PROSITE" id="PS00301">
    <property type="entry name" value="G_TR_1"/>
    <property type="match status" value="1"/>
</dbReference>
<dbReference type="PROSITE" id="PS51722">
    <property type="entry name" value="G_TR_2"/>
    <property type="match status" value="1"/>
</dbReference>